<dbReference type="EC" id="1.3.5.2" evidence="1"/>
<dbReference type="EMBL" id="CP001043">
    <property type="protein sequence ID" value="ACC70846.1"/>
    <property type="molecule type" value="Genomic_DNA"/>
</dbReference>
<dbReference type="RefSeq" id="WP_012401056.1">
    <property type="nucleotide sequence ID" value="NC_010622.1"/>
</dbReference>
<dbReference type="SMR" id="B2JKL9"/>
<dbReference type="STRING" id="391038.Bphy_1664"/>
<dbReference type="KEGG" id="bph:Bphy_1664"/>
<dbReference type="eggNOG" id="COG0167">
    <property type="taxonomic scope" value="Bacteria"/>
</dbReference>
<dbReference type="HOGENOM" id="CLU_013640_2_0_4"/>
<dbReference type="OrthoDB" id="9802377at2"/>
<dbReference type="UniPathway" id="UPA00070">
    <property type="reaction ID" value="UER00946"/>
</dbReference>
<dbReference type="Proteomes" id="UP000001192">
    <property type="component" value="Chromosome 1"/>
</dbReference>
<dbReference type="GO" id="GO:0005737">
    <property type="term" value="C:cytoplasm"/>
    <property type="evidence" value="ECO:0007669"/>
    <property type="project" value="InterPro"/>
</dbReference>
<dbReference type="GO" id="GO:0005886">
    <property type="term" value="C:plasma membrane"/>
    <property type="evidence" value="ECO:0007669"/>
    <property type="project" value="UniProtKB-SubCell"/>
</dbReference>
<dbReference type="GO" id="GO:0106430">
    <property type="term" value="F:dihydroorotate dehydrogenase (quinone) activity"/>
    <property type="evidence" value="ECO:0007669"/>
    <property type="project" value="UniProtKB-EC"/>
</dbReference>
<dbReference type="GO" id="GO:0006207">
    <property type="term" value="P:'de novo' pyrimidine nucleobase biosynthetic process"/>
    <property type="evidence" value="ECO:0007669"/>
    <property type="project" value="InterPro"/>
</dbReference>
<dbReference type="GO" id="GO:0044205">
    <property type="term" value="P:'de novo' UMP biosynthetic process"/>
    <property type="evidence" value="ECO:0007669"/>
    <property type="project" value="UniProtKB-UniRule"/>
</dbReference>
<dbReference type="CDD" id="cd04738">
    <property type="entry name" value="DHOD_2_like"/>
    <property type="match status" value="1"/>
</dbReference>
<dbReference type="FunFam" id="3.20.20.70:FF:000028">
    <property type="entry name" value="Dihydroorotate dehydrogenase (quinone)"/>
    <property type="match status" value="1"/>
</dbReference>
<dbReference type="Gene3D" id="3.20.20.70">
    <property type="entry name" value="Aldolase class I"/>
    <property type="match status" value="1"/>
</dbReference>
<dbReference type="HAMAP" id="MF_00225">
    <property type="entry name" value="DHO_dh_type2"/>
    <property type="match status" value="1"/>
</dbReference>
<dbReference type="InterPro" id="IPR013785">
    <property type="entry name" value="Aldolase_TIM"/>
</dbReference>
<dbReference type="InterPro" id="IPR050074">
    <property type="entry name" value="DHO_dehydrogenase"/>
</dbReference>
<dbReference type="InterPro" id="IPR012135">
    <property type="entry name" value="Dihydroorotate_DH_1_2"/>
</dbReference>
<dbReference type="InterPro" id="IPR005719">
    <property type="entry name" value="Dihydroorotate_DH_2"/>
</dbReference>
<dbReference type="InterPro" id="IPR005720">
    <property type="entry name" value="Dihydroorotate_DH_cat"/>
</dbReference>
<dbReference type="InterPro" id="IPR001295">
    <property type="entry name" value="Dihydroorotate_DH_CS"/>
</dbReference>
<dbReference type="NCBIfam" id="NF003644">
    <property type="entry name" value="PRK05286.1-1"/>
    <property type="match status" value="1"/>
</dbReference>
<dbReference type="NCBIfam" id="NF003645">
    <property type="entry name" value="PRK05286.1-2"/>
    <property type="match status" value="1"/>
</dbReference>
<dbReference type="NCBIfam" id="NF003646">
    <property type="entry name" value="PRK05286.1-4"/>
    <property type="match status" value="1"/>
</dbReference>
<dbReference type="NCBIfam" id="NF003652">
    <property type="entry name" value="PRK05286.2-5"/>
    <property type="match status" value="1"/>
</dbReference>
<dbReference type="NCBIfam" id="TIGR01036">
    <property type="entry name" value="pyrD_sub2"/>
    <property type="match status" value="1"/>
</dbReference>
<dbReference type="PANTHER" id="PTHR48109:SF4">
    <property type="entry name" value="DIHYDROOROTATE DEHYDROGENASE (QUINONE), MITOCHONDRIAL"/>
    <property type="match status" value="1"/>
</dbReference>
<dbReference type="PANTHER" id="PTHR48109">
    <property type="entry name" value="DIHYDROOROTATE DEHYDROGENASE (QUINONE), MITOCHONDRIAL-RELATED"/>
    <property type="match status" value="1"/>
</dbReference>
<dbReference type="Pfam" id="PF01180">
    <property type="entry name" value="DHO_dh"/>
    <property type="match status" value="1"/>
</dbReference>
<dbReference type="PIRSF" id="PIRSF000164">
    <property type="entry name" value="DHO_oxidase"/>
    <property type="match status" value="1"/>
</dbReference>
<dbReference type="SUPFAM" id="SSF51395">
    <property type="entry name" value="FMN-linked oxidoreductases"/>
    <property type="match status" value="1"/>
</dbReference>
<dbReference type="PROSITE" id="PS00911">
    <property type="entry name" value="DHODEHASE_1"/>
    <property type="match status" value="1"/>
</dbReference>
<dbReference type="PROSITE" id="PS00912">
    <property type="entry name" value="DHODEHASE_2"/>
    <property type="match status" value="1"/>
</dbReference>
<feature type="chain" id="PRO_1000100254" description="Dihydroorotate dehydrogenase (quinone)">
    <location>
        <begin position="1"/>
        <end position="344"/>
    </location>
</feature>
<feature type="active site" description="Nucleophile" evidence="1">
    <location>
        <position position="178"/>
    </location>
</feature>
<feature type="binding site" evidence="1">
    <location>
        <begin position="65"/>
        <end position="69"/>
    </location>
    <ligand>
        <name>FMN</name>
        <dbReference type="ChEBI" id="CHEBI:58210"/>
    </ligand>
</feature>
<feature type="binding site" evidence="1">
    <location>
        <position position="69"/>
    </location>
    <ligand>
        <name>substrate</name>
    </ligand>
</feature>
<feature type="binding site" evidence="1">
    <location>
        <position position="89"/>
    </location>
    <ligand>
        <name>FMN</name>
        <dbReference type="ChEBI" id="CHEBI:58210"/>
    </ligand>
</feature>
<feature type="binding site" evidence="1">
    <location>
        <begin position="114"/>
        <end position="118"/>
    </location>
    <ligand>
        <name>substrate</name>
    </ligand>
</feature>
<feature type="binding site" evidence="1">
    <location>
        <position position="142"/>
    </location>
    <ligand>
        <name>FMN</name>
        <dbReference type="ChEBI" id="CHEBI:58210"/>
    </ligand>
</feature>
<feature type="binding site" evidence="1">
    <location>
        <position position="175"/>
    </location>
    <ligand>
        <name>FMN</name>
        <dbReference type="ChEBI" id="CHEBI:58210"/>
    </ligand>
</feature>
<feature type="binding site" evidence="1">
    <location>
        <position position="175"/>
    </location>
    <ligand>
        <name>substrate</name>
    </ligand>
</feature>
<feature type="binding site" evidence="1">
    <location>
        <position position="180"/>
    </location>
    <ligand>
        <name>substrate</name>
    </ligand>
</feature>
<feature type="binding site" evidence="1">
    <location>
        <position position="220"/>
    </location>
    <ligand>
        <name>FMN</name>
        <dbReference type="ChEBI" id="CHEBI:58210"/>
    </ligand>
</feature>
<feature type="binding site" evidence="1">
    <location>
        <position position="248"/>
    </location>
    <ligand>
        <name>FMN</name>
        <dbReference type="ChEBI" id="CHEBI:58210"/>
    </ligand>
</feature>
<feature type="binding site" evidence="1">
    <location>
        <begin position="249"/>
        <end position="250"/>
    </location>
    <ligand>
        <name>substrate</name>
    </ligand>
</feature>
<feature type="binding site" evidence="1">
    <location>
        <position position="271"/>
    </location>
    <ligand>
        <name>FMN</name>
        <dbReference type="ChEBI" id="CHEBI:58210"/>
    </ligand>
</feature>
<feature type="binding site" evidence="1">
    <location>
        <position position="300"/>
    </location>
    <ligand>
        <name>FMN</name>
        <dbReference type="ChEBI" id="CHEBI:58210"/>
    </ligand>
</feature>
<feature type="binding site" evidence="1">
    <location>
        <begin position="321"/>
        <end position="322"/>
    </location>
    <ligand>
        <name>FMN</name>
        <dbReference type="ChEBI" id="CHEBI:58210"/>
    </ligand>
</feature>
<accession>B2JKL9</accession>
<name>PYRD_PARP8</name>
<protein>
    <recommendedName>
        <fullName evidence="1">Dihydroorotate dehydrogenase (quinone)</fullName>
        <ecNumber evidence="1">1.3.5.2</ecNumber>
    </recommendedName>
    <alternativeName>
        <fullName evidence="1">DHOdehase</fullName>
        <shortName evidence="1">DHOD</shortName>
        <shortName evidence="1">DHODase</shortName>
    </alternativeName>
    <alternativeName>
        <fullName evidence="1">Dihydroorotate oxidase</fullName>
    </alternativeName>
</protein>
<evidence type="ECO:0000255" key="1">
    <source>
        <dbReference type="HAMAP-Rule" id="MF_00225"/>
    </source>
</evidence>
<comment type="function">
    <text evidence="1">Catalyzes the conversion of dihydroorotate to orotate with quinone as electron acceptor.</text>
</comment>
<comment type="catalytic activity">
    <reaction evidence="1">
        <text>(S)-dihydroorotate + a quinone = orotate + a quinol</text>
        <dbReference type="Rhea" id="RHEA:30187"/>
        <dbReference type="ChEBI" id="CHEBI:24646"/>
        <dbReference type="ChEBI" id="CHEBI:30839"/>
        <dbReference type="ChEBI" id="CHEBI:30864"/>
        <dbReference type="ChEBI" id="CHEBI:132124"/>
        <dbReference type="EC" id="1.3.5.2"/>
    </reaction>
</comment>
<comment type="cofactor">
    <cofactor evidence="1">
        <name>FMN</name>
        <dbReference type="ChEBI" id="CHEBI:58210"/>
    </cofactor>
    <text evidence="1">Binds 1 FMN per subunit.</text>
</comment>
<comment type="pathway">
    <text evidence="1">Pyrimidine metabolism; UMP biosynthesis via de novo pathway; orotate from (S)-dihydroorotate (quinone route): step 1/1.</text>
</comment>
<comment type="subunit">
    <text evidence="1">Monomer.</text>
</comment>
<comment type="subcellular location">
    <subcellularLocation>
        <location evidence="1">Cell membrane</location>
        <topology evidence="1">Peripheral membrane protein</topology>
    </subcellularLocation>
</comment>
<comment type="similarity">
    <text evidence="1">Belongs to the dihydroorotate dehydrogenase family. Type 2 subfamily.</text>
</comment>
<organism>
    <name type="scientific">Paraburkholderia phymatum (strain DSM 17167 / CIP 108236 / LMG 21445 / STM815)</name>
    <name type="common">Burkholderia phymatum</name>
    <dbReference type="NCBI Taxonomy" id="391038"/>
    <lineage>
        <taxon>Bacteria</taxon>
        <taxon>Pseudomonadati</taxon>
        <taxon>Pseudomonadota</taxon>
        <taxon>Betaproteobacteria</taxon>
        <taxon>Burkholderiales</taxon>
        <taxon>Burkholderiaceae</taxon>
        <taxon>Paraburkholderia</taxon>
    </lineage>
</organism>
<gene>
    <name evidence="1" type="primary">pyrD</name>
    <name type="ordered locus">Bphy_1664</name>
</gene>
<keyword id="KW-1003">Cell membrane</keyword>
<keyword id="KW-0285">Flavoprotein</keyword>
<keyword id="KW-0288">FMN</keyword>
<keyword id="KW-0472">Membrane</keyword>
<keyword id="KW-0560">Oxidoreductase</keyword>
<keyword id="KW-0665">Pyrimidine biosynthesis</keyword>
<keyword id="KW-1185">Reference proteome</keyword>
<proteinExistence type="inferred from homology"/>
<sequence>MFSSLYPLVRAQLFRMDAEDAHHLTLRLLRAAGRTGLAGALAPRVPDSPRTVMGLTFRNPVGLAAGLDKDGACIDGLAALGFGFIEVGTVTPRAQPGNPRPRMFRLPQADAVINRMGFNNAGVDQFVKNVQAARYRGTLGLNIGKNADTPIERAADDYLYCLERVYPFASYVTVNISSPNTKNLRQLQGAGELDALLAALKDKQQRLADLHGKLVPLALKIAPDLDDEQVKSIADTLLRHQFEGVIATNTTLSRTAVQGLPHADEAGGLSGRPVFDASNEVIRKLRAEVGGDVPIIGVGGIFSGADAQAKLDAGASLVQLYTGFIYRGPALVAECAQALAMRAA</sequence>
<reference key="1">
    <citation type="journal article" date="2014" name="Stand. Genomic Sci.">
        <title>Complete genome sequence of Burkholderia phymatum STM815(T), a broad host range and efficient nitrogen-fixing symbiont of Mimosa species.</title>
        <authorList>
            <person name="Moulin L."/>
            <person name="Klonowska A."/>
            <person name="Caroline B."/>
            <person name="Booth K."/>
            <person name="Vriezen J.A."/>
            <person name="Melkonian R."/>
            <person name="James E.K."/>
            <person name="Young J.P."/>
            <person name="Bena G."/>
            <person name="Hauser L."/>
            <person name="Land M."/>
            <person name="Kyrpides N."/>
            <person name="Bruce D."/>
            <person name="Chain P."/>
            <person name="Copeland A."/>
            <person name="Pitluck S."/>
            <person name="Woyke T."/>
            <person name="Lizotte-Waniewski M."/>
            <person name="Bristow J."/>
            <person name="Riley M."/>
        </authorList>
    </citation>
    <scope>NUCLEOTIDE SEQUENCE [LARGE SCALE GENOMIC DNA]</scope>
    <source>
        <strain>DSM 17167 / CIP 108236 / LMG 21445 / STM815</strain>
    </source>
</reference>